<comment type="function">
    <text evidence="1">Cell division factor that enhances FtsZ-ring assembly. Directly interacts with FtsZ and promotes bundling of FtsZ protofilaments, with a reduction in FtsZ GTPase activity.</text>
</comment>
<comment type="subunit">
    <text evidence="1">Interacts with FtsZ.</text>
</comment>
<comment type="subcellular location">
    <subcellularLocation>
        <location evidence="1">Cytoplasm</location>
    </subcellularLocation>
    <text evidence="1">Localizes to mid-cell in an FtsZ-dependent manner.</text>
</comment>
<comment type="similarity">
    <text evidence="1">Belongs to the ZapD family.</text>
</comment>
<organism>
    <name type="scientific">Salmonella newport (strain SL254)</name>
    <dbReference type="NCBI Taxonomy" id="423368"/>
    <lineage>
        <taxon>Bacteria</taxon>
        <taxon>Pseudomonadati</taxon>
        <taxon>Pseudomonadota</taxon>
        <taxon>Gammaproteobacteria</taxon>
        <taxon>Enterobacterales</taxon>
        <taxon>Enterobacteriaceae</taxon>
        <taxon>Salmonella</taxon>
    </lineage>
</organism>
<reference key="1">
    <citation type="journal article" date="2011" name="J. Bacteriol.">
        <title>Comparative genomics of 28 Salmonella enterica isolates: evidence for CRISPR-mediated adaptive sublineage evolution.</title>
        <authorList>
            <person name="Fricke W.F."/>
            <person name="Mammel M.K."/>
            <person name="McDermott P.F."/>
            <person name="Tartera C."/>
            <person name="White D.G."/>
            <person name="Leclerc J.E."/>
            <person name="Ravel J."/>
            <person name="Cebula T.A."/>
        </authorList>
    </citation>
    <scope>NUCLEOTIDE SEQUENCE [LARGE SCALE GENOMIC DNA]</scope>
    <source>
        <strain>SL254</strain>
    </source>
</reference>
<feature type="chain" id="PRO_1000136953" description="Cell division protein ZapD">
    <location>
        <begin position="1"/>
        <end position="247"/>
    </location>
</feature>
<accession>B4SU61</accession>
<sequence>MHTQVLFEHPLNEKMRTWLRIEFLIQQLSINLPIADHAGALHFFRNISDLLDVFERGEVRTELLKELERQQRKLQAWVEVPGVDQDRIEALRQQLKSAGSVLISAPRIGQQLREDRLIALVRQRLSIPGGCCSFDLPTLHIWLHLQQAQRDAQIETWLASLNPLTQALTLVLDLIRNSAPFRKQTSLNGFYQDNGDDADLLRLMLTLDSQLYPQISGHKSRFAIRFMPLDSENGLVPERLDFELACC</sequence>
<name>ZAPD_SALNS</name>
<proteinExistence type="inferred from homology"/>
<evidence type="ECO:0000255" key="1">
    <source>
        <dbReference type="HAMAP-Rule" id="MF_01092"/>
    </source>
</evidence>
<protein>
    <recommendedName>
        <fullName evidence="1">Cell division protein ZapD</fullName>
    </recommendedName>
    <alternativeName>
        <fullName evidence="1">Z ring-associated protein D</fullName>
    </alternativeName>
</protein>
<dbReference type="EMBL" id="CP001113">
    <property type="protein sequence ID" value="ACF62748.1"/>
    <property type="molecule type" value="Genomic_DNA"/>
</dbReference>
<dbReference type="RefSeq" id="WP_000557443.1">
    <property type="nucleotide sequence ID" value="NZ_CCMR01000003.1"/>
</dbReference>
<dbReference type="SMR" id="B4SU61"/>
<dbReference type="KEGG" id="see:SNSL254_A0152"/>
<dbReference type="HOGENOM" id="CLU_076303_0_0_6"/>
<dbReference type="Proteomes" id="UP000008824">
    <property type="component" value="Chromosome"/>
</dbReference>
<dbReference type="GO" id="GO:0032153">
    <property type="term" value="C:cell division site"/>
    <property type="evidence" value="ECO:0007669"/>
    <property type="project" value="TreeGrafter"/>
</dbReference>
<dbReference type="GO" id="GO:0005737">
    <property type="term" value="C:cytoplasm"/>
    <property type="evidence" value="ECO:0007669"/>
    <property type="project" value="UniProtKB-SubCell"/>
</dbReference>
<dbReference type="GO" id="GO:0000917">
    <property type="term" value="P:division septum assembly"/>
    <property type="evidence" value="ECO:0007669"/>
    <property type="project" value="UniProtKB-KW"/>
</dbReference>
<dbReference type="GO" id="GO:0043093">
    <property type="term" value="P:FtsZ-dependent cytokinesis"/>
    <property type="evidence" value="ECO:0007669"/>
    <property type="project" value="UniProtKB-UniRule"/>
</dbReference>
<dbReference type="FunFam" id="1.10.3900.10:FF:000001">
    <property type="entry name" value="Cell division protein ZapD"/>
    <property type="match status" value="1"/>
</dbReference>
<dbReference type="FunFam" id="2.60.440.10:FF:000001">
    <property type="entry name" value="Cell division protein ZapD"/>
    <property type="match status" value="1"/>
</dbReference>
<dbReference type="Gene3D" id="1.10.3900.10">
    <property type="entry name" value="YacF-like"/>
    <property type="match status" value="1"/>
</dbReference>
<dbReference type="Gene3D" id="2.60.440.10">
    <property type="entry name" value="YacF-like domains"/>
    <property type="match status" value="1"/>
</dbReference>
<dbReference type="HAMAP" id="MF_01092">
    <property type="entry name" value="ZapD"/>
    <property type="match status" value="1"/>
</dbReference>
<dbReference type="InterPro" id="IPR009777">
    <property type="entry name" value="ZapD"/>
</dbReference>
<dbReference type="InterPro" id="IPR027462">
    <property type="entry name" value="ZapD_C"/>
</dbReference>
<dbReference type="InterPro" id="IPR036268">
    <property type="entry name" value="ZapD_sf"/>
</dbReference>
<dbReference type="NCBIfam" id="NF003653">
    <property type="entry name" value="PRK05287.1-1"/>
    <property type="match status" value="1"/>
</dbReference>
<dbReference type="NCBIfam" id="NF003655">
    <property type="entry name" value="PRK05287.1-3"/>
    <property type="match status" value="1"/>
</dbReference>
<dbReference type="PANTHER" id="PTHR39455">
    <property type="entry name" value="CELL DIVISION PROTEIN ZAPD"/>
    <property type="match status" value="1"/>
</dbReference>
<dbReference type="PANTHER" id="PTHR39455:SF1">
    <property type="entry name" value="CELL DIVISION PROTEIN ZAPD"/>
    <property type="match status" value="1"/>
</dbReference>
<dbReference type="Pfam" id="PF07072">
    <property type="entry name" value="ZapD"/>
    <property type="match status" value="1"/>
</dbReference>
<dbReference type="SUPFAM" id="SSF160950">
    <property type="entry name" value="YacF-like"/>
    <property type="match status" value="1"/>
</dbReference>
<gene>
    <name evidence="1" type="primary">zapD</name>
    <name type="ordered locus">SNSL254_A0152</name>
</gene>
<keyword id="KW-0131">Cell cycle</keyword>
<keyword id="KW-0132">Cell division</keyword>
<keyword id="KW-0963">Cytoplasm</keyword>
<keyword id="KW-0717">Septation</keyword>